<comment type="function">
    <text evidence="1">E3 UFM1-protein ligase that mediates ufmylation of target proteins.</text>
</comment>
<comment type="interaction">
    <interactant intactId="EBI-172922">
        <id>Q9VI55</id>
    </interactant>
    <interactant intactId="EBI-148976">
        <id>Q9VDD1</id>
        <label>CG5862</label>
    </interactant>
    <organismsDiffer>false</organismsDiffer>
    <experiments>5</experiments>
</comment>
<comment type="alternative products">
    <event type="alternative splicing"/>
    <isoform>
        <id>Q9VI55-1</id>
        <name>A</name>
        <sequence type="displayed"/>
    </isoform>
    <isoform>
        <id>Q9VI55-2</id>
        <name>B</name>
        <sequence type="described" ref="VSP_038767"/>
    </isoform>
</comment>
<comment type="developmental stage">
    <text evidence="4">Expression in the adult brain declines with age.</text>
</comment>
<comment type="disruption phenotype">
    <text evidence="3 4">RNAi-mediated knockdown is lethal (PubMed:26872069). RNAi-mediated knockdown in adult neuronal tissue results in reduced adult lifespan and progressive locomoter defects due to neurodegeneration, when in combination with knockdown of Uba5; brains show evidence of increased ER stress (PubMed:37086384). Neuronal cells in these adults display defects in autophagy (PubMed:37086384).</text>
</comment>
<comment type="similarity">
    <text evidence="5">Belongs to the UFL1 family.</text>
</comment>
<protein>
    <recommendedName>
        <fullName>E3 UFM1-protein ligase 1 homolog</fullName>
        <ecNumber evidence="1">2.3.2.-</ecNumber>
    </recommendedName>
    <alternativeName>
        <fullName evidence="5">E3 UFM1-protein transferase 1 homolog</fullName>
    </alternativeName>
    <alternativeName>
        <fullName evidence="6">UFM1 specific ligase 1</fullName>
    </alternativeName>
</protein>
<gene>
    <name evidence="6" type="primary">Ufl1</name>
    <name evidence="6" type="ORF">CG1104</name>
</gene>
<evidence type="ECO:0000250" key="1">
    <source>
        <dbReference type="UniProtKB" id="O94874"/>
    </source>
</evidence>
<evidence type="ECO:0000256" key="2">
    <source>
        <dbReference type="SAM" id="MobiDB-lite"/>
    </source>
</evidence>
<evidence type="ECO:0000269" key="3">
    <source>
    </source>
</evidence>
<evidence type="ECO:0000269" key="4">
    <source>
    </source>
</evidence>
<evidence type="ECO:0000305" key="5"/>
<evidence type="ECO:0000312" key="6">
    <source>
        <dbReference type="FlyBase" id="FBgn0037467"/>
    </source>
</evidence>
<dbReference type="EC" id="2.3.2.-" evidence="1"/>
<dbReference type="EMBL" id="AE014297">
    <property type="protein sequence ID" value="AAF54073.1"/>
    <property type="molecule type" value="Genomic_DNA"/>
</dbReference>
<dbReference type="EMBL" id="AE014297">
    <property type="protein sequence ID" value="AAN13356.1"/>
    <property type="molecule type" value="Genomic_DNA"/>
</dbReference>
<dbReference type="EMBL" id="AY051887">
    <property type="protein sequence ID" value="AAK93311.1"/>
    <property type="molecule type" value="mRNA"/>
</dbReference>
<dbReference type="RefSeq" id="NP_001246957.1">
    <molecule id="Q9VI55-1"/>
    <property type="nucleotide sequence ID" value="NM_001260028.2"/>
</dbReference>
<dbReference type="RefSeq" id="NP_649690.1">
    <molecule id="Q9VI55-1"/>
    <property type="nucleotide sequence ID" value="NM_141433.3"/>
</dbReference>
<dbReference type="SMR" id="Q9VI55"/>
<dbReference type="BioGRID" id="66041">
    <property type="interactions" value="36"/>
</dbReference>
<dbReference type="FunCoup" id="Q9VI55">
    <property type="interactions" value="2548"/>
</dbReference>
<dbReference type="IntAct" id="Q9VI55">
    <property type="interactions" value="4"/>
</dbReference>
<dbReference type="STRING" id="7227.FBpp0081157"/>
<dbReference type="PaxDb" id="7227-FBpp0293859"/>
<dbReference type="DNASU" id="40843"/>
<dbReference type="EnsemblMetazoa" id="FBtr0081643">
    <molecule id="Q9VI55-1"/>
    <property type="protein sequence ID" value="FBpp0081157"/>
    <property type="gene ID" value="FBgn0037467"/>
</dbReference>
<dbReference type="EnsemblMetazoa" id="FBtr0305316">
    <molecule id="Q9VI55-1"/>
    <property type="protein sequence ID" value="FBpp0293859"/>
    <property type="gene ID" value="FBgn0037467"/>
</dbReference>
<dbReference type="GeneID" id="40843"/>
<dbReference type="KEGG" id="dme:Dmel_CG1104"/>
<dbReference type="UCSC" id="CG1104-RA">
    <molecule id="Q9VI55-1"/>
    <property type="organism name" value="d. melanogaster"/>
</dbReference>
<dbReference type="UCSC" id="CG1104-RB">
    <property type="organism name" value="d. melanogaster"/>
</dbReference>
<dbReference type="AGR" id="FB:FBgn0037467"/>
<dbReference type="CTD" id="23376"/>
<dbReference type="FlyBase" id="FBgn0037467">
    <property type="gene designation" value="Ufl1"/>
</dbReference>
<dbReference type="VEuPathDB" id="VectorBase:FBgn0037467"/>
<dbReference type="eggNOG" id="KOG2235">
    <property type="taxonomic scope" value="Eukaryota"/>
</dbReference>
<dbReference type="GeneTree" id="ENSGT00390000002112"/>
<dbReference type="HOGENOM" id="CLU_012417_1_1_1"/>
<dbReference type="InParanoid" id="Q9VI55"/>
<dbReference type="OMA" id="CILHASG"/>
<dbReference type="OrthoDB" id="10258297at2759"/>
<dbReference type="PhylomeDB" id="Q9VI55"/>
<dbReference type="Reactome" id="R-DME-983168">
    <property type="pathway name" value="Antigen processing: Ubiquitination &amp; Proteasome degradation"/>
</dbReference>
<dbReference type="SignaLink" id="Q9VI55"/>
<dbReference type="BioGRID-ORCS" id="40843">
    <property type="hits" value="0 hits in 1 CRISPR screen"/>
</dbReference>
<dbReference type="GenomeRNAi" id="40843"/>
<dbReference type="PRO" id="PR:Q9VI55"/>
<dbReference type="Proteomes" id="UP000000803">
    <property type="component" value="Chromosome 3R"/>
</dbReference>
<dbReference type="Bgee" id="FBgn0037467">
    <property type="expression patterns" value="Expressed in spermathecum and 115 other cell types or tissues"/>
</dbReference>
<dbReference type="ExpressionAtlas" id="Q9VI55">
    <property type="expression patterns" value="baseline and differential"/>
</dbReference>
<dbReference type="GO" id="GO:0005829">
    <property type="term" value="C:cytosol"/>
    <property type="evidence" value="ECO:0000304"/>
    <property type="project" value="FlyBase"/>
</dbReference>
<dbReference type="GO" id="GO:0012505">
    <property type="term" value="C:endomembrane system"/>
    <property type="evidence" value="ECO:0007005"/>
    <property type="project" value="FlyBase"/>
</dbReference>
<dbReference type="GO" id="GO:0005789">
    <property type="term" value="C:endoplasmic reticulum membrane"/>
    <property type="evidence" value="ECO:0000318"/>
    <property type="project" value="GO_Central"/>
</dbReference>
<dbReference type="GO" id="GO:0061666">
    <property type="term" value="F:UFM1 ligase activity"/>
    <property type="evidence" value="ECO:0000315"/>
    <property type="project" value="FlyBase"/>
</dbReference>
<dbReference type="GO" id="GO:0071568">
    <property type="term" value="F:UFM1 transferase activity"/>
    <property type="evidence" value="ECO:0000318"/>
    <property type="project" value="GO_Central"/>
</dbReference>
<dbReference type="GO" id="GO:0071569">
    <property type="term" value="P:protein ufmylation"/>
    <property type="evidence" value="ECO:0000315"/>
    <property type="project" value="FlyBase"/>
</dbReference>
<dbReference type="GO" id="GO:0034976">
    <property type="term" value="P:response to endoplasmic reticulum stress"/>
    <property type="evidence" value="ECO:0000318"/>
    <property type="project" value="GO_Central"/>
</dbReference>
<dbReference type="GO" id="GO:0061709">
    <property type="term" value="P:reticulophagy"/>
    <property type="evidence" value="ECO:0000318"/>
    <property type="project" value="GO_Central"/>
</dbReference>
<dbReference type="InterPro" id="IPR018611">
    <property type="entry name" value="Ufl1"/>
</dbReference>
<dbReference type="InterPro" id="IPR056761">
    <property type="entry name" value="Ufl1-like_C"/>
</dbReference>
<dbReference type="InterPro" id="IPR056580">
    <property type="entry name" value="Ufl1_dom"/>
</dbReference>
<dbReference type="InterPro" id="IPR056579">
    <property type="entry name" value="Ufl1_N"/>
</dbReference>
<dbReference type="PANTHER" id="PTHR31057">
    <property type="entry name" value="E3 UFM1-PROTEIN LIGASE 1"/>
    <property type="match status" value="1"/>
</dbReference>
<dbReference type="PANTHER" id="PTHR31057:SF0">
    <property type="entry name" value="E3 UFM1-PROTEIN LIGASE 1"/>
    <property type="match status" value="1"/>
</dbReference>
<dbReference type="Pfam" id="PF09743">
    <property type="entry name" value="E3_UFM1_ligase"/>
    <property type="match status" value="1"/>
</dbReference>
<dbReference type="Pfam" id="PF23659">
    <property type="entry name" value="UFL1"/>
    <property type="match status" value="1"/>
</dbReference>
<dbReference type="Pfam" id="PF25041">
    <property type="entry name" value="UFL1_C"/>
    <property type="match status" value="1"/>
</dbReference>
<name>UFL1_DROME</name>
<organism>
    <name type="scientific">Drosophila melanogaster</name>
    <name type="common">Fruit fly</name>
    <dbReference type="NCBI Taxonomy" id="7227"/>
    <lineage>
        <taxon>Eukaryota</taxon>
        <taxon>Metazoa</taxon>
        <taxon>Ecdysozoa</taxon>
        <taxon>Arthropoda</taxon>
        <taxon>Hexapoda</taxon>
        <taxon>Insecta</taxon>
        <taxon>Pterygota</taxon>
        <taxon>Neoptera</taxon>
        <taxon>Endopterygota</taxon>
        <taxon>Diptera</taxon>
        <taxon>Brachycera</taxon>
        <taxon>Muscomorpha</taxon>
        <taxon>Ephydroidea</taxon>
        <taxon>Drosophilidae</taxon>
        <taxon>Drosophila</taxon>
        <taxon>Sophophora</taxon>
    </lineage>
</organism>
<reference key="1">
    <citation type="journal article" date="2000" name="Science">
        <title>The genome sequence of Drosophila melanogaster.</title>
        <authorList>
            <person name="Adams M.D."/>
            <person name="Celniker S.E."/>
            <person name="Holt R.A."/>
            <person name="Evans C.A."/>
            <person name="Gocayne J.D."/>
            <person name="Amanatides P.G."/>
            <person name="Scherer S.E."/>
            <person name="Li P.W."/>
            <person name="Hoskins R.A."/>
            <person name="Galle R.F."/>
            <person name="George R.A."/>
            <person name="Lewis S.E."/>
            <person name="Richards S."/>
            <person name="Ashburner M."/>
            <person name="Henderson S.N."/>
            <person name="Sutton G.G."/>
            <person name="Wortman J.R."/>
            <person name="Yandell M.D."/>
            <person name="Zhang Q."/>
            <person name="Chen L.X."/>
            <person name="Brandon R.C."/>
            <person name="Rogers Y.-H.C."/>
            <person name="Blazej R.G."/>
            <person name="Champe M."/>
            <person name="Pfeiffer B.D."/>
            <person name="Wan K.H."/>
            <person name="Doyle C."/>
            <person name="Baxter E.G."/>
            <person name="Helt G."/>
            <person name="Nelson C.R."/>
            <person name="Miklos G.L.G."/>
            <person name="Abril J.F."/>
            <person name="Agbayani A."/>
            <person name="An H.-J."/>
            <person name="Andrews-Pfannkoch C."/>
            <person name="Baldwin D."/>
            <person name="Ballew R.M."/>
            <person name="Basu A."/>
            <person name="Baxendale J."/>
            <person name="Bayraktaroglu L."/>
            <person name="Beasley E.M."/>
            <person name="Beeson K.Y."/>
            <person name="Benos P.V."/>
            <person name="Berman B.P."/>
            <person name="Bhandari D."/>
            <person name="Bolshakov S."/>
            <person name="Borkova D."/>
            <person name="Botchan M.R."/>
            <person name="Bouck J."/>
            <person name="Brokstein P."/>
            <person name="Brottier P."/>
            <person name="Burtis K.C."/>
            <person name="Busam D.A."/>
            <person name="Butler H."/>
            <person name="Cadieu E."/>
            <person name="Center A."/>
            <person name="Chandra I."/>
            <person name="Cherry J.M."/>
            <person name="Cawley S."/>
            <person name="Dahlke C."/>
            <person name="Davenport L.B."/>
            <person name="Davies P."/>
            <person name="de Pablos B."/>
            <person name="Delcher A."/>
            <person name="Deng Z."/>
            <person name="Mays A.D."/>
            <person name="Dew I."/>
            <person name="Dietz S.M."/>
            <person name="Dodson K."/>
            <person name="Doup L.E."/>
            <person name="Downes M."/>
            <person name="Dugan-Rocha S."/>
            <person name="Dunkov B.C."/>
            <person name="Dunn P."/>
            <person name="Durbin K.J."/>
            <person name="Evangelista C.C."/>
            <person name="Ferraz C."/>
            <person name="Ferriera S."/>
            <person name="Fleischmann W."/>
            <person name="Fosler C."/>
            <person name="Gabrielian A.E."/>
            <person name="Garg N.S."/>
            <person name="Gelbart W.M."/>
            <person name="Glasser K."/>
            <person name="Glodek A."/>
            <person name="Gong F."/>
            <person name="Gorrell J.H."/>
            <person name="Gu Z."/>
            <person name="Guan P."/>
            <person name="Harris M."/>
            <person name="Harris N.L."/>
            <person name="Harvey D.A."/>
            <person name="Heiman T.J."/>
            <person name="Hernandez J.R."/>
            <person name="Houck J."/>
            <person name="Hostin D."/>
            <person name="Houston K.A."/>
            <person name="Howland T.J."/>
            <person name="Wei M.-H."/>
            <person name="Ibegwam C."/>
            <person name="Jalali M."/>
            <person name="Kalush F."/>
            <person name="Karpen G.H."/>
            <person name="Ke Z."/>
            <person name="Kennison J.A."/>
            <person name="Ketchum K.A."/>
            <person name="Kimmel B.E."/>
            <person name="Kodira C.D."/>
            <person name="Kraft C.L."/>
            <person name="Kravitz S."/>
            <person name="Kulp D."/>
            <person name="Lai Z."/>
            <person name="Lasko P."/>
            <person name="Lei Y."/>
            <person name="Levitsky A.A."/>
            <person name="Li J.H."/>
            <person name="Li Z."/>
            <person name="Liang Y."/>
            <person name="Lin X."/>
            <person name="Liu X."/>
            <person name="Mattei B."/>
            <person name="McIntosh T.C."/>
            <person name="McLeod M.P."/>
            <person name="McPherson D."/>
            <person name="Merkulov G."/>
            <person name="Milshina N.V."/>
            <person name="Mobarry C."/>
            <person name="Morris J."/>
            <person name="Moshrefi A."/>
            <person name="Mount S.M."/>
            <person name="Moy M."/>
            <person name="Murphy B."/>
            <person name="Murphy L."/>
            <person name="Muzny D.M."/>
            <person name="Nelson D.L."/>
            <person name="Nelson D.R."/>
            <person name="Nelson K.A."/>
            <person name="Nixon K."/>
            <person name="Nusskern D.R."/>
            <person name="Pacleb J.M."/>
            <person name="Palazzolo M."/>
            <person name="Pittman G.S."/>
            <person name="Pan S."/>
            <person name="Pollard J."/>
            <person name="Puri V."/>
            <person name="Reese M.G."/>
            <person name="Reinert K."/>
            <person name="Remington K."/>
            <person name="Saunders R.D.C."/>
            <person name="Scheeler F."/>
            <person name="Shen H."/>
            <person name="Shue B.C."/>
            <person name="Siden-Kiamos I."/>
            <person name="Simpson M."/>
            <person name="Skupski M.P."/>
            <person name="Smith T.J."/>
            <person name="Spier E."/>
            <person name="Spradling A.C."/>
            <person name="Stapleton M."/>
            <person name="Strong R."/>
            <person name="Sun E."/>
            <person name="Svirskas R."/>
            <person name="Tector C."/>
            <person name="Turner R."/>
            <person name="Venter E."/>
            <person name="Wang A.H."/>
            <person name="Wang X."/>
            <person name="Wang Z.-Y."/>
            <person name="Wassarman D.A."/>
            <person name="Weinstock G.M."/>
            <person name="Weissenbach J."/>
            <person name="Williams S.M."/>
            <person name="Woodage T."/>
            <person name="Worley K.C."/>
            <person name="Wu D."/>
            <person name="Yang S."/>
            <person name="Yao Q.A."/>
            <person name="Ye J."/>
            <person name="Yeh R.-F."/>
            <person name="Zaveri J.S."/>
            <person name="Zhan M."/>
            <person name="Zhang G."/>
            <person name="Zhao Q."/>
            <person name="Zheng L."/>
            <person name="Zheng X.H."/>
            <person name="Zhong F.N."/>
            <person name="Zhong W."/>
            <person name="Zhou X."/>
            <person name="Zhu S.C."/>
            <person name="Zhu X."/>
            <person name="Smith H.O."/>
            <person name="Gibbs R.A."/>
            <person name="Myers E.W."/>
            <person name="Rubin G.M."/>
            <person name="Venter J.C."/>
        </authorList>
    </citation>
    <scope>NUCLEOTIDE SEQUENCE [LARGE SCALE GENOMIC DNA]</scope>
    <source>
        <strain>Berkeley</strain>
    </source>
</reference>
<reference key="2">
    <citation type="journal article" date="2002" name="Genome Biol.">
        <title>Annotation of the Drosophila melanogaster euchromatic genome: a systematic review.</title>
        <authorList>
            <person name="Misra S."/>
            <person name="Crosby M.A."/>
            <person name="Mungall C.J."/>
            <person name="Matthews B.B."/>
            <person name="Campbell K.S."/>
            <person name="Hradecky P."/>
            <person name="Huang Y."/>
            <person name="Kaminker J.S."/>
            <person name="Millburn G.H."/>
            <person name="Prochnik S.E."/>
            <person name="Smith C.D."/>
            <person name="Tupy J.L."/>
            <person name="Whitfield E.J."/>
            <person name="Bayraktaroglu L."/>
            <person name="Berman B.P."/>
            <person name="Bettencourt B.R."/>
            <person name="Celniker S.E."/>
            <person name="de Grey A.D.N.J."/>
            <person name="Drysdale R.A."/>
            <person name="Harris N.L."/>
            <person name="Richter J."/>
            <person name="Russo S."/>
            <person name="Schroeder A.J."/>
            <person name="Shu S.Q."/>
            <person name="Stapleton M."/>
            <person name="Yamada C."/>
            <person name="Ashburner M."/>
            <person name="Gelbart W.M."/>
            <person name="Rubin G.M."/>
            <person name="Lewis S.E."/>
        </authorList>
    </citation>
    <scope>GENOME REANNOTATION</scope>
    <scope>ALTERNATIVE SPLICING (ISOFORMS A AND B)</scope>
    <source>
        <strain>Berkeley</strain>
    </source>
</reference>
<reference key="3">
    <citation type="journal article" date="2002" name="Genome Biol.">
        <title>A Drosophila full-length cDNA resource.</title>
        <authorList>
            <person name="Stapleton M."/>
            <person name="Carlson J.W."/>
            <person name="Brokstein P."/>
            <person name="Yu C."/>
            <person name="Champe M."/>
            <person name="George R.A."/>
            <person name="Guarin H."/>
            <person name="Kronmiller B."/>
            <person name="Pacleb J.M."/>
            <person name="Park S."/>
            <person name="Wan K.H."/>
            <person name="Rubin G.M."/>
            <person name="Celniker S.E."/>
        </authorList>
    </citation>
    <scope>NUCLEOTIDE SEQUENCE [LARGE SCALE MRNA] (ISOFORM A)</scope>
    <source>
        <strain>Berkeley</strain>
        <tissue>Embryo</tissue>
    </source>
</reference>
<reference key="4">
    <citation type="journal article" date="2016" name="PLoS ONE">
        <title>UBA5 mutations cause a new form of autosomal recessive cerebellar ataxia.</title>
        <authorList>
            <person name="Duan R."/>
            <person name="Shi Y."/>
            <person name="Yu L."/>
            <person name="Zhang G."/>
            <person name="Li J."/>
            <person name="Lin Y."/>
            <person name="Guo J."/>
            <person name="Wang J."/>
            <person name="Shen L."/>
            <person name="Jiang H."/>
            <person name="Wang G."/>
            <person name="Tang B."/>
        </authorList>
    </citation>
    <scope>DISRUPTION PHENOTYPE</scope>
</reference>
<reference key="5">
    <citation type="journal article" date="2023" name="Cell. Mol. Life Sci.">
        <title>A neuroprotective role of Ufmylation through Atg9 in the aging brain of Drosophila.</title>
        <authorList>
            <person name="Li H."/>
            <person name="Yu Z."/>
            <person name="Niu Z."/>
            <person name="Cheng Y."/>
            <person name="Wei Z."/>
            <person name="Cai Y."/>
            <person name="Ma F."/>
            <person name="Hu L."/>
            <person name="Zhu J."/>
            <person name="Zhang W."/>
        </authorList>
    </citation>
    <scope>DEVELOPMENTAL STAGE</scope>
    <scope>DISRUPTION PHENOTYPE</scope>
</reference>
<feature type="chain" id="PRO_0000391882" description="E3 UFM1-protein ligase 1 homolog">
    <location>
        <begin position="1"/>
        <end position="782"/>
    </location>
</feature>
<feature type="region of interest" description="Disordered" evidence="2">
    <location>
        <begin position="404"/>
        <end position="478"/>
    </location>
</feature>
<feature type="splice variant" id="VSP_038767" description="In isoform B." evidence="5">
    <location>
        <begin position="1"/>
        <end position="43"/>
    </location>
</feature>
<accession>Q9VI55</accession>
<accession>Q8INS2</accession>
<sequence length="782" mass="87483">MGSDWDEIKRLAADFQKAQLTSTLQKLSERNCVEIVTLLLEKQMLEVVFTNDGKEYITPDHLEREIQDELYVNGGRANLVEVSKTLNVDLSRIELLAERISAENQSVHLVLGQLIDEDYISHIAQEINEKLVQRGEVSISELASQFDLPSDFLQHDVVEKHLGKIIKGRQDASNPRVFFTQAYIQRCKAKIRGALAAITRPINVAVILQKIGVQEKIFYSLLDEIAPAGQVTSKQANSQYVPHIYAKTQADWVNSFYKQNSFLEYDAIQKLGISDAKSYIRKQFPNEEFLYLKRVALGARLVELTVVTALNECSATKQYLDLTTILPSNLSEEDIEEVFSTIMAQKHSNPSNFVYLDGIVFSQPYLAQLVQPCQALAESQAKAAIDGGVYQQYIVEKTLAQKGNVSTQELEDEGKVDKRDERRKKASSGKAGGGAQGRETKTKSTKKHQRGKAAAQFDSDDEDDAQQGSRGGGGASKKAVKPLELVKTADIVKLITASLEEEGLEHLSKSIASLYTNQFNQTALARAQELFEATPQTNRRQTHAAIQDRINTLLIDIRLYEKGLKLFPQDTQTQLVKYLLKSLGNEICNELSLYVASECNLTVKNTNLNVDQRNKLAQECEAQYRAALLEQNKALNKSIDDFELATETVLKTCSMIIKKVDKKKDRLLIADHKKKLQKQLLECNEPALLLHLAALILFTTITGSILHASGKFVSAILQHIRGSLNEDQNALLLRYHDLVLQVLQAIPDSNESKLANEHLQTMQNQVVELAQNFSRASISKAD</sequence>
<keyword id="KW-0025">Alternative splicing</keyword>
<keyword id="KW-1185">Reference proteome</keyword>
<keyword id="KW-0808">Transferase</keyword>
<keyword id="KW-0833">Ubl conjugation pathway</keyword>
<proteinExistence type="evidence at protein level"/>